<keyword id="KW-0255">Endonuclease</keyword>
<keyword id="KW-0378">Hydrolase</keyword>
<keyword id="KW-0540">Nuclease</keyword>
<keyword id="KW-0694">RNA-binding</keyword>
<keyword id="KW-0819">tRNA processing</keyword>
<comment type="function">
    <text evidence="1">RNaseP catalyzes the removal of the 5'-leader sequence from pre-tRNA to produce the mature 5'-terminus. It can also cleave other RNA substrates such as 4.5S RNA. The protein component plays an auxiliary but essential role in vivo by binding to the 5'-leader sequence and broadening the substrate specificity of the ribozyme.</text>
</comment>
<comment type="catalytic activity">
    <reaction evidence="1">
        <text>Endonucleolytic cleavage of RNA, removing 5'-extranucleotides from tRNA precursor.</text>
        <dbReference type="EC" id="3.1.26.5"/>
    </reaction>
</comment>
<comment type="subunit">
    <text evidence="1">Consists of a catalytic RNA component (M1 or rnpB) and a protein subunit.</text>
</comment>
<comment type="similarity">
    <text evidence="1">Belongs to the RnpA family.</text>
</comment>
<sequence length="126" mass="14259">MLPAPYRLRDRRAFQALYQAGQRRSGAGLILLFQPMPAGCEGIPSQVGLVIGKKVSKSAVKRNRLRRRLREILRPLCPNLKPGYRLLLISKPNLLTYKWPELQAEVHRLLQKADLLVSPSPDPEPS</sequence>
<reference key="1">
    <citation type="journal article" date="2007" name="ISME J.">
        <title>Population level functional diversity in a microbial community revealed by comparative genomic and metagenomic analyses.</title>
        <authorList>
            <person name="Bhaya D."/>
            <person name="Grossman A.R."/>
            <person name="Steunou A.-S."/>
            <person name="Khuri N."/>
            <person name="Cohan F.M."/>
            <person name="Hamamura N."/>
            <person name="Melendrez M.C."/>
            <person name="Bateson M.M."/>
            <person name="Ward D.M."/>
            <person name="Heidelberg J.F."/>
        </authorList>
    </citation>
    <scope>NUCLEOTIDE SEQUENCE [LARGE SCALE GENOMIC DNA]</scope>
    <source>
        <strain>JA-3-3Ab</strain>
    </source>
</reference>
<protein>
    <recommendedName>
        <fullName evidence="1">Ribonuclease P protein component</fullName>
        <shortName evidence="1">RNase P protein</shortName>
        <shortName evidence="1">RNaseP protein</shortName>
        <ecNumber evidence="1">3.1.26.5</ecNumber>
    </recommendedName>
    <alternativeName>
        <fullName evidence="1">Protein C5</fullName>
    </alternativeName>
</protein>
<proteinExistence type="inferred from homology"/>
<evidence type="ECO:0000255" key="1">
    <source>
        <dbReference type="HAMAP-Rule" id="MF_00227"/>
    </source>
</evidence>
<organism>
    <name type="scientific">Synechococcus sp. (strain JA-3-3Ab)</name>
    <name type="common">Cyanobacteria bacterium Yellowstone A-Prime</name>
    <dbReference type="NCBI Taxonomy" id="321327"/>
    <lineage>
        <taxon>Bacteria</taxon>
        <taxon>Bacillati</taxon>
        <taxon>Cyanobacteriota</taxon>
        <taxon>Cyanophyceae</taxon>
        <taxon>Synechococcales</taxon>
        <taxon>Synechococcaceae</taxon>
        <taxon>Synechococcus</taxon>
    </lineage>
</organism>
<dbReference type="EC" id="3.1.26.5" evidence="1"/>
<dbReference type="EMBL" id="CP000239">
    <property type="protein sequence ID" value="ABD01002.1"/>
    <property type="molecule type" value="Genomic_DNA"/>
</dbReference>
<dbReference type="RefSeq" id="WP_011431672.1">
    <property type="nucleotide sequence ID" value="NC_007775.1"/>
</dbReference>
<dbReference type="SMR" id="Q2JQX0"/>
<dbReference type="STRING" id="321327.CYA_2904"/>
<dbReference type="KEGG" id="cya:CYA_2904"/>
<dbReference type="eggNOG" id="COG0594">
    <property type="taxonomic scope" value="Bacteria"/>
</dbReference>
<dbReference type="HOGENOM" id="CLU_117179_9_0_3"/>
<dbReference type="OrthoDB" id="540358at2"/>
<dbReference type="Proteomes" id="UP000008818">
    <property type="component" value="Chromosome"/>
</dbReference>
<dbReference type="GO" id="GO:0030677">
    <property type="term" value="C:ribonuclease P complex"/>
    <property type="evidence" value="ECO:0007669"/>
    <property type="project" value="TreeGrafter"/>
</dbReference>
<dbReference type="GO" id="GO:0042781">
    <property type="term" value="F:3'-tRNA processing endoribonuclease activity"/>
    <property type="evidence" value="ECO:0007669"/>
    <property type="project" value="TreeGrafter"/>
</dbReference>
<dbReference type="GO" id="GO:0004526">
    <property type="term" value="F:ribonuclease P activity"/>
    <property type="evidence" value="ECO:0007669"/>
    <property type="project" value="UniProtKB-UniRule"/>
</dbReference>
<dbReference type="GO" id="GO:0000049">
    <property type="term" value="F:tRNA binding"/>
    <property type="evidence" value="ECO:0007669"/>
    <property type="project" value="UniProtKB-UniRule"/>
</dbReference>
<dbReference type="GO" id="GO:0001682">
    <property type="term" value="P:tRNA 5'-leader removal"/>
    <property type="evidence" value="ECO:0007669"/>
    <property type="project" value="UniProtKB-UniRule"/>
</dbReference>
<dbReference type="Gene3D" id="3.30.230.10">
    <property type="match status" value="1"/>
</dbReference>
<dbReference type="HAMAP" id="MF_00227">
    <property type="entry name" value="RNase_P"/>
    <property type="match status" value="1"/>
</dbReference>
<dbReference type="InterPro" id="IPR020568">
    <property type="entry name" value="Ribosomal_Su5_D2-typ_SF"/>
</dbReference>
<dbReference type="InterPro" id="IPR014721">
    <property type="entry name" value="Ribsml_uS5_D2-typ_fold_subgr"/>
</dbReference>
<dbReference type="InterPro" id="IPR000100">
    <property type="entry name" value="RNase_P"/>
</dbReference>
<dbReference type="InterPro" id="IPR020539">
    <property type="entry name" value="RNase_P_CS"/>
</dbReference>
<dbReference type="NCBIfam" id="TIGR00188">
    <property type="entry name" value="rnpA"/>
    <property type="match status" value="1"/>
</dbReference>
<dbReference type="PANTHER" id="PTHR33992">
    <property type="entry name" value="RIBONUCLEASE P PROTEIN COMPONENT"/>
    <property type="match status" value="1"/>
</dbReference>
<dbReference type="PANTHER" id="PTHR33992:SF1">
    <property type="entry name" value="RIBONUCLEASE P PROTEIN COMPONENT"/>
    <property type="match status" value="1"/>
</dbReference>
<dbReference type="Pfam" id="PF00825">
    <property type="entry name" value="Ribonuclease_P"/>
    <property type="match status" value="1"/>
</dbReference>
<dbReference type="SUPFAM" id="SSF54211">
    <property type="entry name" value="Ribosomal protein S5 domain 2-like"/>
    <property type="match status" value="1"/>
</dbReference>
<dbReference type="PROSITE" id="PS00648">
    <property type="entry name" value="RIBONUCLEASE_P"/>
    <property type="match status" value="1"/>
</dbReference>
<gene>
    <name evidence="1" type="primary">rnpA</name>
    <name type="ordered locus">CYA_2904</name>
</gene>
<feature type="chain" id="PRO_1000204356" description="Ribonuclease P protein component">
    <location>
        <begin position="1"/>
        <end position="126"/>
    </location>
</feature>
<name>RNPA_SYNJA</name>
<accession>Q2JQX0</accession>